<evidence type="ECO:0000250" key="1">
    <source>
        <dbReference type="UniProtKB" id="B1AZA5"/>
    </source>
</evidence>
<evidence type="ECO:0000250" key="2">
    <source>
        <dbReference type="UniProtKB" id="D3ZXD8"/>
    </source>
</evidence>
<evidence type="ECO:0000250" key="3">
    <source>
        <dbReference type="UniProtKB" id="Q9H330"/>
    </source>
</evidence>
<evidence type="ECO:0000255" key="4"/>
<evidence type="ECO:0000256" key="5">
    <source>
        <dbReference type="SAM" id="MobiDB-lite"/>
    </source>
</evidence>
<evidence type="ECO:0000305" key="6"/>
<sequence length="868" mass="96123">MADDGGPEEALSPRGSPSRVPRVQRPVGAASGGGGCGETPRTAALALRFDKPIKQAFYNTGAVLFVCLCCGAAVLVYFILEAFLRPLLWAVLCGTFLHPFKSSLTRLGRHWLQRLHRAHTPIVLAALLLPICFADYGVEALGEQALRRRRLLLLLGAGGPLLYGLYSLGSYLGVQVLLAHAGALICCGLDYFNSLWIWTLVVGYVLAVSFKWNASTERYLRAMSIPVWIILLFHLASLAGAWRIPVFLVIVFLMSVGTLYEKQNGKESSGAELPGQVISMAASTLATLAISITGYESSTEDHTSTQPAETETMDRGEPPPTLSSSSSPTSPSPPPGRQRSEAGTFLRKKKTSDVYFVSLLWAIVGVQIWSNLWIVQLLPVPIAVWVLKKLVIHFGVVNFLEKRCSVWWQATEHFLRERQQALAPWPIIGLGKFLLKVDSKLWHWLNKKMIIWLEKMLDKIISIFIIFLLVIGTLLLALLLTAKVHQESVHMIEVTSNLINETLANHPEWANWLPEAQVVQRALNSAANNVYQYGREWITHKLHKILGDKVNNTAVIEKQVLELWDRLYHSWFVKNVSHSGRHRGHKLHISRQNSWLGDILDWQDIASFVHENIETFLSILESLWVVMSRNVSLLFSTITTLLTILFYSGTALLNFVLSLIIFLTTLFYLLSSSDEYYKPVKWVISLTPLSQPGPSSNIIGQSVEEAIRHSRGVFDASLKMAGFYGLYTWLTHTIFGINIVFIPSALAAILGAVPFLGTYWAAVPAVLDLWLTQGLGCKAILLLVFHLLPTYFVDTAIYSDISGGGHPYLTGLAVAGGAYYLGLEGAIIGPILLCILVVASNIYSAMLVSPTNSVPTPNQTPWPAQAQR</sequence>
<name>TM245_BOVIN</name>
<proteinExistence type="inferred from homology"/>
<dbReference type="EMBL" id="DAAA02024465">
    <property type="status" value="NOT_ANNOTATED_CDS"/>
    <property type="molecule type" value="Genomic_DNA"/>
</dbReference>
<dbReference type="FunCoup" id="E1BD52">
    <property type="interactions" value="3041"/>
</dbReference>
<dbReference type="STRING" id="9913.ENSBTAP00000059685"/>
<dbReference type="GlyCosmos" id="E1BD52">
    <property type="glycosylation" value="4 sites, No reported glycans"/>
</dbReference>
<dbReference type="GlyGen" id="E1BD52">
    <property type="glycosylation" value="4 sites"/>
</dbReference>
<dbReference type="PaxDb" id="9913-ENSBTAP00000047510"/>
<dbReference type="eggNOG" id="KOG2365">
    <property type="taxonomic scope" value="Eukaryota"/>
</dbReference>
<dbReference type="HOGENOM" id="CLU_005960_0_0_1"/>
<dbReference type="InParanoid" id="E1BD52"/>
<dbReference type="TreeFam" id="TF315224"/>
<dbReference type="Proteomes" id="UP000009136">
    <property type="component" value="Unplaced"/>
</dbReference>
<dbReference type="GO" id="GO:0016020">
    <property type="term" value="C:membrane"/>
    <property type="evidence" value="ECO:0007669"/>
    <property type="project" value="UniProtKB-SubCell"/>
</dbReference>
<dbReference type="InterPro" id="IPR002549">
    <property type="entry name" value="AI-2E-like"/>
</dbReference>
<dbReference type="PANTHER" id="PTHR21716">
    <property type="entry name" value="TRANSMEMBRANE PROTEIN"/>
    <property type="match status" value="1"/>
</dbReference>
<dbReference type="PANTHER" id="PTHR21716:SF4">
    <property type="entry name" value="TRANSMEMBRANE PROTEIN 245"/>
    <property type="match status" value="1"/>
</dbReference>
<dbReference type="Pfam" id="PF01594">
    <property type="entry name" value="AI-2E_transport"/>
    <property type="match status" value="1"/>
</dbReference>
<protein>
    <recommendedName>
        <fullName>Transmembrane protein 245</fullName>
    </recommendedName>
</protein>
<keyword id="KW-0007">Acetylation</keyword>
<keyword id="KW-0325">Glycoprotein</keyword>
<keyword id="KW-0472">Membrane</keyword>
<keyword id="KW-0597">Phosphoprotein</keyword>
<keyword id="KW-1185">Reference proteome</keyword>
<keyword id="KW-0812">Transmembrane</keyword>
<keyword id="KW-1133">Transmembrane helix</keyword>
<feature type="initiator methionine" description="Removed" evidence="1">
    <location>
        <position position="1"/>
    </location>
</feature>
<feature type="chain" id="PRO_0000417168" description="Transmembrane protein 245">
    <location>
        <begin position="2"/>
        <end position="868"/>
    </location>
</feature>
<feature type="transmembrane region" description="Helical" evidence="4">
    <location>
        <begin position="63"/>
        <end position="83"/>
    </location>
</feature>
<feature type="transmembrane region" description="Helical" evidence="4">
    <location>
        <begin position="122"/>
        <end position="142"/>
    </location>
</feature>
<feature type="transmembrane region" description="Helical" evidence="4">
    <location>
        <begin position="151"/>
        <end position="171"/>
    </location>
</feature>
<feature type="transmembrane region" description="Helical" evidence="4">
    <location>
        <begin position="188"/>
        <end position="208"/>
    </location>
</feature>
<feature type="transmembrane region" description="Helical" evidence="4">
    <location>
        <begin position="222"/>
        <end position="242"/>
    </location>
</feature>
<feature type="transmembrane region" description="Helical" evidence="4">
    <location>
        <begin position="244"/>
        <end position="264"/>
    </location>
</feature>
<feature type="transmembrane region" description="Helical" evidence="4">
    <location>
        <begin position="273"/>
        <end position="293"/>
    </location>
</feature>
<feature type="transmembrane region" description="Helical" evidence="4">
    <location>
        <begin position="354"/>
        <end position="374"/>
    </location>
</feature>
<feature type="transmembrane region" description="Helical" evidence="4">
    <location>
        <begin position="377"/>
        <end position="397"/>
    </location>
</feature>
<feature type="transmembrane region" description="Helical" evidence="4">
    <location>
        <begin position="460"/>
        <end position="480"/>
    </location>
</feature>
<feature type="transmembrane region" description="Helical" evidence="4">
    <location>
        <begin position="626"/>
        <end position="646"/>
    </location>
</feature>
<feature type="transmembrane region" description="Helical" evidence="4">
    <location>
        <begin position="650"/>
        <end position="670"/>
    </location>
</feature>
<feature type="transmembrane region" description="Helical" evidence="4">
    <location>
        <begin position="734"/>
        <end position="754"/>
    </location>
</feature>
<feature type="transmembrane region" description="Helical" evidence="4">
    <location>
        <begin position="755"/>
        <end position="775"/>
    </location>
</feature>
<feature type="transmembrane region" description="Helical" evidence="4">
    <location>
        <begin position="779"/>
        <end position="799"/>
    </location>
</feature>
<feature type="transmembrane region" description="Helical" evidence="4">
    <location>
        <begin position="818"/>
        <end position="838"/>
    </location>
</feature>
<feature type="region of interest" description="Disordered" evidence="5">
    <location>
        <begin position="1"/>
        <end position="36"/>
    </location>
</feature>
<feature type="region of interest" description="Disordered" evidence="5">
    <location>
        <begin position="296"/>
        <end position="343"/>
    </location>
</feature>
<feature type="modified residue" description="N-acetylalanine" evidence="1">
    <location>
        <position position="2"/>
    </location>
</feature>
<feature type="modified residue" description="Phosphoserine" evidence="1">
    <location>
        <position position="12"/>
    </location>
</feature>
<feature type="modified residue" description="Phosphoserine" evidence="1">
    <location>
        <position position="16"/>
    </location>
</feature>
<feature type="modified residue" description="Phosphothreonine" evidence="3">
    <location>
        <position position="39"/>
    </location>
</feature>
<feature type="modified residue" description="Phosphoserine" evidence="3">
    <location>
        <position position="327"/>
    </location>
</feature>
<feature type="modified residue" description="Phosphoserine" evidence="2">
    <location>
        <position position="330"/>
    </location>
</feature>
<feature type="modified residue" description="Phosphoserine" evidence="3">
    <location>
        <position position="332"/>
    </location>
</feature>
<feature type="glycosylation site" description="N-linked (GlcNAc...) asparagine" evidence="4">
    <location>
        <position position="213"/>
    </location>
</feature>
<feature type="glycosylation site" description="N-linked (GlcNAc...) asparagine" evidence="4">
    <location>
        <position position="500"/>
    </location>
</feature>
<feature type="glycosylation site" description="N-linked (GlcNAc...) asparagine" evidence="4">
    <location>
        <position position="551"/>
    </location>
</feature>
<feature type="glycosylation site" description="N-linked (GlcNAc...) asparagine" evidence="4">
    <location>
        <position position="575"/>
    </location>
</feature>
<comment type="subcellular location">
    <subcellularLocation>
        <location evidence="6">Membrane</location>
        <topology evidence="6">Multi-pass membrane protein</topology>
    </subcellularLocation>
</comment>
<comment type="similarity">
    <text evidence="6">Belongs to the autoinducer-2 exporter (AI-2E) (TC 2.A.86) family.</text>
</comment>
<reference key="1">
    <citation type="journal article" date="2009" name="Genome Biol.">
        <title>A whole-genome assembly of the domestic cow, Bos taurus.</title>
        <authorList>
            <person name="Zimin A.V."/>
            <person name="Delcher A.L."/>
            <person name="Florea L."/>
            <person name="Kelley D.R."/>
            <person name="Schatz M.C."/>
            <person name="Puiu D."/>
            <person name="Hanrahan F."/>
            <person name="Pertea G."/>
            <person name="Van Tassell C.P."/>
            <person name="Sonstegard T.S."/>
            <person name="Marcais G."/>
            <person name="Roberts M."/>
            <person name="Subramanian P."/>
            <person name="Yorke J.A."/>
            <person name="Salzberg S.L."/>
        </authorList>
    </citation>
    <scope>NUCLEOTIDE SEQUENCE [LARGE SCALE GENOMIC DNA]</scope>
    <source>
        <strain>Hereford</strain>
    </source>
</reference>
<gene>
    <name type="primary">TMEM245</name>
</gene>
<accession>E1BD52</accession>
<organism>
    <name type="scientific">Bos taurus</name>
    <name type="common">Bovine</name>
    <dbReference type="NCBI Taxonomy" id="9913"/>
    <lineage>
        <taxon>Eukaryota</taxon>
        <taxon>Metazoa</taxon>
        <taxon>Chordata</taxon>
        <taxon>Craniata</taxon>
        <taxon>Vertebrata</taxon>
        <taxon>Euteleostomi</taxon>
        <taxon>Mammalia</taxon>
        <taxon>Eutheria</taxon>
        <taxon>Laurasiatheria</taxon>
        <taxon>Artiodactyla</taxon>
        <taxon>Ruminantia</taxon>
        <taxon>Pecora</taxon>
        <taxon>Bovidae</taxon>
        <taxon>Bovinae</taxon>
        <taxon>Bos</taxon>
    </lineage>
</organism>